<gene>
    <name evidence="11" type="primary">BCO1</name>
    <name evidence="11" type="synonym">BCDO</name>
    <name evidence="11" type="synonym">BCDO1</name>
    <name evidence="11" type="synonym">BCMO1</name>
</gene>
<feature type="chain" id="PRO_0000143933" description="Beta,beta-carotene 15,15'-dioxygenase">
    <location>
        <begin position="1"/>
        <end position="547"/>
    </location>
</feature>
<feature type="region of interest" description="Disordered" evidence="3">
    <location>
        <begin position="528"/>
        <end position="547"/>
    </location>
</feature>
<feature type="compositionally biased region" description="Basic and acidic residues" evidence="3">
    <location>
        <begin position="528"/>
        <end position="540"/>
    </location>
</feature>
<feature type="binding site" evidence="2">
    <location>
        <position position="172"/>
    </location>
    <ligand>
        <name>Fe cation</name>
        <dbReference type="ChEBI" id="CHEBI:24875"/>
        <note>catalytic</note>
    </ligand>
</feature>
<feature type="binding site" evidence="2">
    <location>
        <position position="237"/>
    </location>
    <ligand>
        <name>Fe cation</name>
        <dbReference type="ChEBI" id="CHEBI:24875"/>
        <note>catalytic</note>
    </ligand>
</feature>
<feature type="binding site" evidence="2">
    <location>
        <position position="308"/>
    </location>
    <ligand>
        <name>Fe cation</name>
        <dbReference type="ChEBI" id="CHEBI:24875"/>
        <note>catalytic</note>
    </ligand>
</feature>
<feature type="binding site" evidence="2">
    <location>
        <position position="514"/>
    </location>
    <ligand>
        <name>Fe cation</name>
        <dbReference type="ChEBI" id="CHEBI:24875"/>
        <note>catalytic</note>
    </ligand>
</feature>
<feature type="sequence variant" id="VAR_058112" description="In HCVAD; decreased beta-carotene 15,15'-monooxygenase activity; 90% decrease compared to wild-type; decreased catalytic efficiency; no effect on affinity for all-trans-beta-carotene; dbSNP:rs119478057." evidence="6">
    <original>T</original>
    <variation>M</variation>
    <location>
        <position position="170"/>
    </location>
</feature>
<feature type="sequence variant" id="VAR_048406" description="In dbSNP:rs12934922." evidence="5 8">
    <original>R</original>
    <variation>S</variation>
    <location>
        <position position="267"/>
    </location>
</feature>
<feature type="sequence variant" id="VAR_048407" description="In dbSNP:rs7501331.">
    <original>A</original>
    <variation>V</variation>
    <location>
        <position position="379"/>
    </location>
</feature>
<feature type="sequence conflict" description="In Ref. 2; BAA91776." evidence="9" ref="2">
    <original>D</original>
    <variation>G</variation>
    <location>
        <position position="302"/>
    </location>
</feature>
<protein>
    <recommendedName>
        <fullName evidence="10">Beta,beta-carotene 15,15'-dioxygenase</fullName>
        <ecNumber evidence="4 6 7">1.13.11.63</ecNumber>
    </recommendedName>
    <alternativeName>
        <fullName>Beta-carotene dioxygenase 1</fullName>
    </alternativeName>
    <alternativeName>
        <fullName evidence="11">Beta-carotene oxygenase 1</fullName>
    </alternativeName>
</protein>
<name>BCDO1_HUMAN</name>
<accession>Q9HAY6</accession>
<accession>A0AV48</accession>
<accession>A0AV50</accession>
<accession>Q9NVH5</accession>
<keyword id="KW-0963">Cytoplasm</keyword>
<keyword id="KW-0223">Dioxygenase</keyword>
<keyword id="KW-0225">Disease variant</keyword>
<keyword id="KW-0408">Iron</keyword>
<keyword id="KW-0443">Lipid metabolism</keyword>
<keyword id="KW-0479">Metal-binding</keyword>
<keyword id="KW-0560">Oxidoreductase</keyword>
<keyword id="KW-1267">Proteomics identification</keyword>
<keyword id="KW-1185">Reference proteome</keyword>
<dbReference type="EC" id="1.13.11.63" evidence="4 6 7"/>
<dbReference type="EMBL" id="AF294900">
    <property type="protein sequence ID" value="AAG15380.1"/>
    <property type="molecule type" value="mRNA"/>
</dbReference>
<dbReference type="EMBL" id="AK001592">
    <property type="protein sequence ID" value="BAA91776.1"/>
    <property type="molecule type" value="mRNA"/>
</dbReference>
<dbReference type="EMBL" id="CH471114">
    <property type="protein sequence ID" value="EAW95537.1"/>
    <property type="molecule type" value="Genomic_DNA"/>
</dbReference>
<dbReference type="EMBL" id="BC126210">
    <property type="protein sequence ID" value="AAI26211.1"/>
    <property type="molecule type" value="mRNA"/>
</dbReference>
<dbReference type="EMBL" id="BC126212">
    <property type="protein sequence ID" value="AAI26213.1"/>
    <property type="molecule type" value="mRNA"/>
</dbReference>
<dbReference type="CCDS" id="CCDS10934.1"/>
<dbReference type="RefSeq" id="NP_059125.2">
    <property type="nucleotide sequence ID" value="NM_017429.3"/>
</dbReference>
<dbReference type="SMR" id="Q9HAY6"/>
<dbReference type="BioGRID" id="119790">
    <property type="interactions" value="15"/>
</dbReference>
<dbReference type="FunCoup" id="Q9HAY6">
    <property type="interactions" value="698"/>
</dbReference>
<dbReference type="IntAct" id="Q9HAY6">
    <property type="interactions" value="3"/>
</dbReference>
<dbReference type="STRING" id="9606.ENSP00000258168"/>
<dbReference type="DrugBank" id="DB06755">
    <property type="generic name" value="Beta carotene"/>
</dbReference>
<dbReference type="SwissLipids" id="SLP:000000143"/>
<dbReference type="GlyGen" id="Q9HAY6">
    <property type="glycosylation" value="1 site, 1 O-linked glycan (1 site)"/>
</dbReference>
<dbReference type="iPTMnet" id="Q9HAY6"/>
<dbReference type="PhosphoSitePlus" id="Q9HAY6"/>
<dbReference type="BioMuta" id="BCO1"/>
<dbReference type="DMDM" id="41688803"/>
<dbReference type="jPOST" id="Q9HAY6"/>
<dbReference type="MassIVE" id="Q9HAY6"/>
<dbReference type="PaxDb" id="9606-ENSP00000258168"/>
<dbReference type="PeptideAtlas" id="Q9HAY6"/>
<dbReference type="ProteomicsDB" id="81458"/>
<dbReference type="Antibodypedia" id="48219">
    <property type="antibodies" value="132 antibodies from 20 providers"/>
</dbReference>
<dbReference type="DNASU" id="53630"/>
<dbReference type="Ensembl" id="ENST00000258168.7">
    <property type="protein sequence ID" value="ENSP00000258168.2"/>
    <property type="gene ID" value="ENSG00000135697.10"/>
</dbReference>
<dbReference type="GeneID" id="53630"/>
<dbReference type="KEGG" id="hsa:53630"/>
<dbReference type="MANE-Select" id="ENST00000258168.7">
    <property type="protein sequence ID" value="ENSP00000258168.2"/>
    <property type="RefSeq nucleotide sequence ID" value="NM_017429.3"/>
    <property type="RefSeq protein sequence ID" value="NP_059125.2"/>
</dbReference>
<dbReference type="UCSC" id="uc002fgn.2">
    <property type="organism name" value="human"/>
</dbReference>
<dbReference type="AGR" id="HGNC:13815"/>
<dbReference type="CTD" id="53630"/>
<dbReference type="DisGeNET" id="53630"/>
<dbReference type="GeneCards" id="BCO1"/>
<dbReference type="HGNC" id="HGNC:13815">
    <property type="gene designation" value="BCO1"/>
</dbReference>
<dbReference type="HPA" id="ENSG00000135697">
    <property type="expression patterns" value="Tissue enhanced (choroid plexus, intestine)"/>
</dbReference>
<dbReference type="MalaCards" id="BCO1"/>
<dbReference type="MIM" id="115300">
    <property type="type" value="phenotype"/>
</dbReference>
<dbReference type="MIM" id="605748">
    <property type="type" value="gene"/>
</dbReference>
<dbReference type="neXtProt" id="NX_Q9HAY6"/>
<dbReference type="OpenTargets" id="ENSG00000135697"/>
<dbReference type="Orphanet" id="199285">
    <property type="disease" value="Hereditary hypercarotenemia and vitamin A deficiency"/>
</dbReference>
<dbReference type="PharmGKB" id="PA37812"/>
<dbReference type="VEuPathDB" id="HostDB:ENSG00000135697"/>
<dbReference type="eggNOG" id="KOG1285">
    <property type="taxonomic scope" value="Eukaryota"/>
</dbReference>
<dbReference type="GeneTree" id="ENSGT00950000182913"/>
<dbReference type="HOGENOM" id="CLU_016472_1_1_1"/>
<dbReference type="InParanoid" id="Q9HAY6"/>
<dbReference type="OMA" id="SCMAFHR"/>
<dbReference type="OrthoDB" id="407010at2759"/>
<dbReference type="PAN-GO" id="Q9HAY6">
    <property type="GO annotations" value="4 GO annotations based on evolutionary models"/>
</dbReference>
<dbReference type="PhylomeDB" id="Q9HAY6"/>
<dbReference type="TreeFam" id="TF314019"/>
<dbReference type="BioCyc" id="MetaCyc:HS06050-MONOMER"/>
<dbReference type="BRENDA" id="1.13.11.63">
    <property type="organism ID" value="2681"/>
</dbReference>
<dbReference type="PathwayCommons" id="Q9HAY6"/>
<dbReference type="Reactome" id="R-HSA-975634">
    <property type="pathway name" value="Retinoid metabolism and transport"/>
</dbReference>
<dbReference type="SABIO-RK" id="Q9HAY6"/>
<dbReference type="SignaLink" id="Q9HAY6"/>
<dbReference type="UniPathway" id="UPA00912"/>
<dbReference type="BioGRID-ORCS" id="53630">
    <property type="hits" value="6 hits in 1140 CRISPR screens"/>
</dbReference>
<dbReference type="ChiTaRS" id="BCO1">
    <property type="organism name" value="human"/>
</dbReference>
<dbReference type="GenomeRNAi" id="53630"/>
<dbReference type="Pharos" id="Q9HAY6">
    <property type="development level" value="Tbio"/>
</dbReference>
<dbReference type="PRO" id="PR:Q9HAY6"/>
<dbReference type="Proteomes" id="UP000005640">
    <property type="component" value="Chromosome 16"/>
</dbReference>
<dbReference type="RNAct" id="Q9HAY6">
    <property type="molecule type" value="protein"/>
</dbReference>
<dbReference type="Bgee" id="ENSG00000135697">
    <property type="expression patterns" value="Expressed in pigmented layer of retina and 95 other cell types or tissues"/>
</dbReference>
<dbReference type="ExpressionAtlas" id="Q9HAY6">
    <property type="expression patterns" value="baseline and differential"/>
</dbReference>
<dbReference type="GO" id="GO:0005829">
    <property type="term" value="C:cytosol"/>
    <property type="evidence" value="ECO:0000250"/>
    <property type="project" value="UniProtKB"/>
</dbReference>
<dbReference type="GO" id="GO:0003834">
    <property type="term" value="F:beta-carotene 15,15'-dioxygenase activity"/>
    <property type="evidence" value="ECO:0000314"/>
    <property type="project" value="UniProtKB"/>
</dbReference>
<dbReference type="GO" id="GO:0010436">
    <property type="term" value="F:carotenoid dioxygenase activity"/>
    <property type="evidence" value="ECO:0000318"/>
    <property type="project" value="GO_Central"/>
</dbReference>
<dbReference type="GO" id="GO:0046872">
    <property type="term" value="F:metal ion binding"/>
    <property type="evidence" value="ECO:0007669"/>
    <property type="project" value="UniProtKB-KW"/>
</dbReference>
<dbReference type="GO" id="GO:1901810">
    <property type="term" value="P:beta-carotene metabolic process"/>
    <property type="evidence" value="ECO:0007669"/>
    <property type="project" value="Ensembl"/>
</dbReference>
<dbReference type="GO" id="GO:0016121">
    <property type="term" value="P:carotene catabolic process"/>
    <property type="evidence" value="ECO:0000314"/>
    <property type="project" value="UniProtKB"/>
</dbReference>
<dbReference type="GO" id="GO:0042574">
    <property type="term" value="P:retinal metabolic process"/>
    <property type="evidence" value="ECO:0000314"/>
    <property type="project" value="UniProtKB"/>
</dbReference>
<dbReference type="GO" id="GO:0001523">
    <property type="term" value="P:retinoid metabolic process"/>
    <property type="evidence" value="ECO:0000314"/>
    <property type="project" value="UniProtKB"/>
</dbReference>
<dbReference type="GO" id="GO:0042572">
    <property type="term" value="P:retinol metabolic process"/>
    <property type="evidence" value="ECO:0007669"/>
    <property type="project" value="UniProtKB-UniPathway"/>
</dbReference>
<dbReference type="GO" id="GO:0035238">
    <property type="term" value="P:vitamin A biosynthetic process"/>
    <property type="evidence" value="ECO:0000303"/>
    <property type="project" value="BHF-UCL"/>
</dbReference>
<dbReference type="InterPro" id="IPR004294">
    <property type="entry name" value="Carotenoid_Oase"/>
</dbReference>
<dbReference type="PANTHER" id="PTHR10543:SF132">
    <property type="entry name" value="BETA,BETA-CAROTENE 15,15'-DIOXYGENASE"/>
    <property type="match status" value="1"/>
</dbReference>
<dbReference type="PANTHER" id="PTHR10543">
    <property type="entry name" value="BETA-CAROTENE DIOXYGENASE"/>
    <property type="match status" value="1"/>
</dbReference>
<dbReference type="Pfam" id="PF03055">
    <property type="entry name" value="RPE65"/>
    <property type="match status" value="1"/>
</dbReference>
<reference key="1">
    <citation type="journal article" date="2001" name="Genomics">
        <title>Cloning and characterization of a human beta,beta-carotene-15,15-prime dioxygenase that is highly expressed in the retinal pigment epithelium.</title>
        <authorList>
            <person name="Yan W."/>
            <person name="Jang G.-F."/>
            <person name="Haeseleer F."/>
            <person name="Esumi N."/>
            <person name="Chang J."/>
            <person name="Kerrigan M."/>
            <person name="Campochiaro M."/>
            <person name="Campochiaro P."/>
            <person name="Palczewski K."/>
            <person name="Zack D.J."/>
        </authorList>
    </citation>
    <scope>NUCLEOTIDE SEQUENCE [MRNA]</scope>
    <scope>FUNCTION</scope>
    <scope>CATALYTIC ACTIVITY</scope>
    <scope>TISSUE SPECIFICITY</scope>
    <source>
        <tissue>Retinal pigment epithelium</tissue>
    </source>
</reference>
<reference key="2">
    <citation type="journal article" date="2004" name="Nat. Genet.">
        <title>Complete sequencing and characterization of 21,243 full-length human cDNAs.</title>
        <authorList>
            <person name="Ota T."/>
            <person name="Suzuki Y."/>
            <person name="Nishikawa T."/>
            <person name="Otsuki T."/>
            <person name="Sugiyama T."/>
            <person name="Irie R."/>
            <person name="Wakamatsu A."/>
            <person name="Hayashi K."/>
            <person name="Sato H."/>
            <person name="Nagai K."/>
            <person name="Kimura K."/>
            <person name="Makita H."/>
            <person name="Sekine M."/>
            <person name="Obayashi M."/>
            <person name="Nishi T."/>
            <person name="Shibahara T."/>
            <person name="Tanaka T."/>
            <person name="Ishii S."/>
            <person name="Yamamoto J."/>
            <person name="Saito K."/>
            <person name="Kawai Y."/>
            <person name="Isono Y."/>
            <person name="Nakamura Y."/>
            <person name="Nagahari K."/>
            <person name="Murakami K."/>
            <person name="Yasuda T."/>
            <person name="Iwayanagi T."/>
            <person name="Wagatsuma M."/>
            <person name="Shiratori A."/>
            <person name="Sudo H."/>
            <person name="Hosoiri T."/>
            <person name="Kaku Y."/>
            <person name="Kodaira H."/>
            <person name="Kondo H."/>
            <person name="Sugawara M."/>
            <person name="Takahashi M."/>
            <person name="Kanda K."/>
            <person name="Yokoi T."/>
            <person name="Furuya T."/>
            <person name="Kikkawa E."/>
            <person name="Omura Y."/>
            <person name="Abe K."/>
            <person name="Kamihara K."/>
            <person name="Katsuta N."/>
            <person name="Sato K."/>
            <person name="Tanikawa M."/>
            <person name="Yamazaki M."/>
            <person name="Ninomiya K."/>
            <person name="Ishibashi T."/>
            <person name="Yamashita H."/>
            <person name="Murakawa K."/>
            <person name="Fujimori K."/>
            <person name="Tanai H."/>
            <person name="Kimata M."/>
            <person name="Watanabe M."/>
            <person name="Hiraoka S."/>
            <person name="Chiba Y."/>
            <person name="Ishida S."/>
            <person name="Ono Y."/>
            <person name="Takiguchi S."/>
            <person name="Watanabe S."/>
            <person name="Yosida M."/>
            <person name="Hotuta T."/>
            <person name="Kusano J."/>
            <person name="Kanehori K."/>
            <person name="Takahashi-Fujii A."/>
            <person name="Hara H."/>
            <person name="Tanase T.-O."/>
            <person name="Nomura Y."/>
            <person name="Togiya S."/>
            <person name="Komai F."/>
            <person name="Hara R."/>
            <person name="Takeuchi K."/>
            <person name="Arita M."/>
            <person name="Imose N."/>
            <person name="Musashino K."/>
            <person name="Yuuki H."/>
            <person name="Oshima A."/>
            <person name="Sasaki N."/>
            <person name="Aotsuka S."/>
            <person name="Yoshikawa Y."/>
            <person name="Matsunawa H."/>
            <person name="Ichihara T."/>
            <person name="Shiohata N."/>
            <person name="Sano S."/>
            <person name="Moriya S."/>
            <person name="Momiyama H."/>
            <person name="Satoh N."/>
            <person name="Takami S."/>
            <person name="Terashima Y."/>
            <person name="Suzuki O."/>
            <person name="Nakagawa S."/>
            <person name="Senoh A."/>
            <person name="Mizoguchi H."/>
            <person name="Goto Y."/>
            <person name="Shimizu F."/>
            <person name="Wakebe H."/>
            <person name="Hishigaki H."/>
            <person name="Watanabe T."/>
            <person name="Sugiyama A."/>
            <person name="Takemoto M."/>
            <person name="Kawakami B."/>
            <person name="Yamazaki M."/>
            <person name="Watanabe K."/>
            <person name="Kumagai A."/>
            <person name="Itakura S."/>
            <person name="Fukuzumi Y."/>
            <person name="Fujimori Y."/>
            <person name="Komiyama M."/>
            <person name="Tashiro H."/>
            <person name="Tanigami A."/>
            <person name="Fujiwara T."/>
            <person name="Ono T."/>
            <person name="Yamada K."/>
            <person name="Fujii Y."/>
            <person name="Ozaki K."/>
            <person name="Hirao M."/>
            <person name="Ohmori Y."/>
            <person name="Kawabata A."/>
            <person name="Hikiji T."/>
            <person name="Kobatake N."/>
            <person name="Inagaki H."/>
            <person name="Ikema Y."/>
            <person name="Okamoto S."/>
            <person name="Okitani R."/>
            <person name="Kawakami T."/>
            <person name="Noguchi S."/>
            <person name="Itoh T."/>
            <person name="Shigeta K."/>
            <person name="Senba T."/>
            <person name="Matsumura K."/>
            <person name="Nakajima Y."/>
            <person name="Mizuno T."/>
            <person name="Morinaga M."/>
            <person name="Sasaki M."/>
            <person name="Togashi T."/>
            <person name="Oyama M."/>
            <person name="Hata H."/>
            <person name="Watanabe M."/>
            <person name="Komatsu T."/>
            <person name="Mizushima-Sugano J."/>
            <person name="Satoh T."/>
            <person name="Shirai Y."/>
            <person name="Takahashi Y."/>
            <person name="Nakagawa K."/>
            <person name="Okumura K."/>
            <person name="Nagase T."/>
            <person name="Nomura N."/>
            <person name="Kikuchi H."/>
            <person name="Masuho Y."/>
            <person name="Yamashita R."/>
            <person name="Nakai K."/>
            <person name="Yada T."/>
            <person name="Nakamura Y."/>
            <person name="Ohara O."/>
            <person name="Isogai T."/>
            <person name="Sugano S."/>
        </authorList>
    </citation>
    <scope>NUCLEOTIDE SEQUENCE [LARGE SCALE MRNA]</scope>
</reference>
<reference key="3">
    <citation type="submission" date="2005-09" db="EMBL/GenBank/DDBJ databases">
        <authorList>
            <person name="Mural R.J."/>
            <person name="Istrail S."/>
            <person name="Sutton G.G."/>
            <person name="Florea L."/>
            <person name="Halpern A.L."/>
            <person name="Mobarry C.M."/>
            <person name="Lippert R."/>
            <person name="Walenz B."/>
            <person name="Shatkay H."/>
            <person name="Dew I."/>
            <person name="Miller J.R."/>
            <person name="Flanigan M.J."/>
            <person name="Edwards N.J."/>
            <person name="Bolanos R."/>
            <person name="Fasulo D."/>
            <person name="Halldorsson B.V."/>
            <person name="Hannenhalli S."/>
            <person name="Turner R."/>
            <person name="Yooseph S."/>
            <person name="Lu F."/>
            <person name="Nusskern D.R."/>
            <person name="Shue B.C."/>
            <person name="Zheng X.H."/>
            <person name="Zhong F."/>
            <person name="Delcher A.L."/>
            <person name="Huson D.H."/>
            <person name="Kravitz S.A."/>
            <person name="Mouchard L."/>
            <person name="Reinert K."/>
            <person name="Remington K.A."/>
            <person name="Clark A.G."/>
            <person name="Waterman M.S."/>
            <person name="Eichler E.E."/>
            <person name="Adams M.D."/>
            <person name="Hunkapiller M.W."/>
            <person name="Myers E.W."/>
            <person name="Venter J.C."/>
        </authorList>
    </citation>
    <scope>NUCLEOTIDE SEQUENCE [LARGE SCALE GENOMIC DNA]</scope>
    <scope>VARIANT SER-267</scope>
</reference>
<reference key="4">
    <citation type="journal article" date="2004" name="Genome Res.">
        <title>The status, quality, and expansion of the NIH full-length cDNA project: the Mammalian Gene Collection (MGC).</title>
        <authorList>
            <consortium name="The MGC Project Team"/>
        </authorList>
    </citation>
    <scope>NUCLEOTIDE SEQUENCE [LARGE SCALE MRNA]</scope>
    <scope>VARIANT SER-267</scope>
    <source>
        <tissue>Colon</tissue>
    </source>
</reference>
<reference key="5">
    <citation type="journal article" date="2014" name="J. Biol. Chem.">
        <title>The human enzyme that converts dietary provitamin A carotenoids to vitamin A is a dioxygenase.</title>
        <authorList>
            <person name="dela Sena C."/>
            <person name="Riedl K.M."/>
            <person name="Narayanasamy S."/>
            <person name="Curley R.W. Jr."/>
            <person name="Schwartz S.J."/>
            <person name="Harrison E.H."/>
        </authorList>
    </citation>
    <scope>FUNCTION</scope>
    <scope>CATALYTIC ACTIVITY</scope>
</reference>
<reference key="6">
    <citation type="journal article" date="2007" name="J. Nutr.">
        <title>Loss-of-function mutation in carotenoid 15,15'-monooxygenase identified in a patient with hypercarotenemia and hypovitaminosis A.</title>
        <authorList>
            <person name="Lindqvist A."/>
            <person name="Sharvill J."/>
            <person name="Sharvill D.E."/>
            <person name="Andersson S."/>
        </authorList>
    </citation>
    <scope>VARIANT HCVAD MET-170</scope>
    <scope>CHARACTERIZATION OF VARIANT HCVAD MET-170</scope>
    <scope>FUNCTION</scope>
    <scope>CATALYTIC ACTIVITY</scope>
    <scope>BIOPHYSICOCHEMICAL PROPERTIES</scope>
    <scope>PATHWAY</scope>
</reference>
<organism>
    <name type="scientific">Homo sapiens</name>
    <name type="common">Human</name>
    <dbReference type="NCBI Taxonomy" id="9606"/>
    <lineage>
        <taxon>Eukaryota</taxon>
        <taxon>Metazoa</taxon>
        <taxon>Chordata</taxon>
        <taxon>Craniata</taxon>
        <taxon>Vertebrata</taxon>
        <taxon>Euteleostomi</taxon>
        <taxon>Mammalia</taxon>
        <taxon>Eutheria</taxon>
        <taxon>Euarchontoglires</taxon>
        <taxon>Primates</taxon>
        <taxon>Haplorrhini</taxon>
        <taxon>Catarrhini</taxon>
        <taxon>Hominidae</taxon>
        <taxon>Homo</taxon>
    </lineage>
</organism>
<sequence length="547" mass="62637">MDIIFGRNRKEQLEPVRAKVTGKIPAWLQGTLLRNGPGMHTVGESRYNHWFDGLALLHSFTIRDGEVYYRSKYLRSDTYNTNIEANRIVVSEFGTMAYPDPCKNIFSKAFSYLSHTIPDFTDNCLINIMKCGEDFYATSETNYIRKINPQTLETLEKVDYRKYVAVNLATSHPHYDEAGNVLNMGTSIVEKGKTKYVIFKIPATVPEGKKQGKSPWKHTEVFCSIPSRSLLSPSYYHSFGVTENYVIFLEQPFRLDILKMATAYIRRMSWASCLAFHREEKTYIHIIDQRTRQPVQTKFYTDAMVVFHHVNAYEEDGCIVFDVIAYEDNSLYQLFYLANLNQDFKENSRLTSVPTLRRFAVPLHVDKNAEVGTNLIKVASTTATALKEEDGQVYCQPEFLYEGLELPRVNYAHNGKQYRYVFATGVQWSPIPTKIIKYDILTKSSLKWREDDCWPAEPLFVPAPGAKDEDDGVILSAIVSTDPQKLPFLLILDAKSFTELARASVDVDMHMDLHGLFITDMDWDTKKQAASEEQRDRASDCHGAPLT</sequence>
<evidence type="ECO:0000250" key="1">
    <source>
        <dbReference type="UniProtKB" id="Q9I993"/>
    </source>
</evidence>
<evidence type="ECO:0000250" key="2">
    <source>
        <dbReference type="UniProtKB" id="Q9JJS6"/>
    </source>
</evidence>
<evidence type="ECO:0000256" key="3">
    <source>
        <dbReference type="SAM" id="MobiDB-lite"/>
    </source>
</evidence>
<evidence type="ECO:0000269" key="4">
    <source>
    </source>
</evidence>
<evidence type="ECO:0000269" key="5">
    <source>
    </source>
</evidence>
<evidence type="ECO:0000269" key="6">
    <source>
    </source>
</evidence>
<evidence type="ECO:0000269" key="7">
    <source>
    </source>
</evidence>
<evidence type="ECO:0000269" key="8">
    <source ref="3"/>
</evidence>
<evidence type="ECO:0000305" key="9"/>
<evidence type="ECO:0000305" key="10">
    <source>
    </source>
</evidence>
<evidence type="ECO:0000312" key="11">
    <source>
        <dbReference type="HGNC" id="HGNC:13815"/>
    </source>
</evidence>
<proteinExistence type="evidence at protein level"/>
<comment type="function">
    <text evidence="4 6 7">Symmetrically cleaves beta-carotene into two molecules of retinal using a dioxygenase mechanism.</text>
</comment>
<comment type="catalytic activity">
    <reaction evidence="4 6 7">
        <text>all-trans-beta-carotene + O2 = 2 all-trans-retinal</text>
        <dbReference type="Rhea" id="RHEA:32887"/>
        <dbReference type="ChEBI" id="CHEBI:15379"/>
        <dbReference type="ChEBI" id="CHEBI:17579"/>
        <dbReference type="ChEBI" id="CHEBI:17898"/>
        <dbReference type="EC" id="1.13.11.63"/>
    </reaction>
    <physiologicalReaction direction="left-to-right" evidence="6">
        <dbReference type="Rhea" id="RHEA:32888"/>
    </physiologicalReaction>
</comment>
<comment type="cofactor">
    <cofactor evidence="2">
        <name>Fe(2+)</name>
        <dbReference type="ChEBI" id="CHEBI:29033"/>
    </cofactor>
    <text evidence="2">Binds 1 Fe(2+) ion per subunit.</text>
</comment>
<comment type="biophysicochemical properties">
    <kinetics>
        <KM evidence="6">6 uM for all-trans-beta-carotene</KM>
        <Vmax evidence="6">7.2 umol/min/mg enzyme for the formation of 2 all-trans-retinal</Vmax>
        <text evidence="6">kcat is 0.45 min(-1) with all-trans-beta-carotene as substrate.</text>
    </kinetics>
</comment>
<comment type="pathway">
    <text evidence="6">Cofactor metabolism; retinol metabolism.</text>
</comment>
<comment type="subcellular location">
    <subcellularLocation>
        <location evidence="1">Cytoplasm</location>
        <location evidence="1">Cytosol</location>
    </subcellularLocation>
</comment>
<comment type="tissue specificity">
    <text evidence="4">Highly expressed in retinal pigment epithelium. Also expressed in kidney, testis, liver, brain, small intestine and colon.</text>
</comment>
<comment type="disease" evidence="6">
    <disease id="DI-01210">
        <name>Hypercarotenemia and vitamin A deficiency, autosomal dominant</name>
        <acronym>HCVAD</acronym>
        <description>A disorder characterized by increased serum beta-carotene, decreased conversion of beta-carotene to vitamin A and decreased serum vitamin A.</description>
        <dbReference type="MIM" id="115300"/>
    </disease>
    <text>The disease is caused by variants affecting the gene represented in this entry.</text>
</comment>
<comment type="similarity">
    <text evidence="9">Belongs to the carotenoid oxygenase family.</text>
</comment>